<organism>
    <name type="scientific">Homo sapiens</name>
    <name type="common">Human</name>
    <dbReference type="NCBI Taxonomy" id="9606"/>
    <lineage>
        <taxon>Eukaryota</taxon>
        <taxon>Metazoa</taxon>
        <taxon>Chordata</taxon>
        <taxon>Craniata</taxon>
        <taxon>Vertebrata</taxon>
        <taxon>Euteleostomi</taxon>
        <taxon>Mammalia</taxon>
        <taxon>Eutheria</taxon>
        <taxon>Euarchontoglires</taxon>
        <taxon>Primates</taxon>
        <taxon>Haplorrhini</taxon>
        <taxon>Catarrhini</taxon>
        <taxon>Hominidae</taxon>
        <taxon>Homo</taxon>
    </lineage>
</organism>
<feature type="chain" id="PRO_0000119216" description="V-type proton ATPase 116 kDa subunit a 2">
    <location>
        <begin position="1"/>
        <end position="856"/>
    </location>
</feature>
<feature type="topological domain" description="Cytoplasmic" evidence="5">
    <location>
        <begin position="1"/>
        <end position="393"/>
    </location>
</feature>
<feature type="transmembrane region" description="Helical" evidence="5">
    <location>
        <begin position="394"/>
        <end position="412"/>
    </location>
</feature>
<feature type="topological domain" description="Vacuolar" evidence="5">
    <location>
        <begin position="413"/>
        <end position="414"/>
    </location>
</feature>
<feature type="transmembrane region" description="Helical" evidence="5">
    <location>
        <begin position="415"/>
        <end position="431"/>
    </location>
</feature>
<feature type="topological domain" description="Cytoplasmic" evidence="5">
    <location>
        <begin position="432"/>
        <end position="445"/>
    </location>
</feature>
<feature type="transmembrane region" description="Helical" evidence="5">
    <location>
        <begin position="446"/>
        <end position="475"/>
    </location>
</feature>
<feature type="topological domain" description="Vacuolar" evidence="5">
    <location>
        <begin position="476"/>
        <end position="549"/>
    </location>
</feature>
<feature type="transmembrane region" description="Helical" evidence="5">
    <location>
        <begin position="550"/>
        <end position="569"/>
    </location>
</feature>
<feature type="topological domain" description="Cytoplasmic" evidence="5">
    <location>
        <begin position="570"/>
        <end position="587"/>
    </location>
</feature>
<feature type="transmembrane region" description="Helical" evidence="5">
    <location>
        <begin position="588"/>
        <end position="608"/>
    </location>
</feature>
<feature type="topological domain" description="Vacuolar" evidence="5">
    <location>
        <begin position="609"/>
        <end position="651"/>
    </location>
</feature>
<feature type="transmembrane region" description="Helical" evidence="5">
    <location>
        <begin position="652"/>
        <end position="671"/>
    </location>
</feature>
<feature type="topological domain" description="Cytoplasmic" evidence="5">
    <location>
        <begin position="672"/>
        <end position="739"/>
    </location>
</feature>
<feature type="transmembrane region" description="Helical" evidence="5">
    <location>
        <begin position="740"/>
        <end position="764"/>
    </location>
</feature>
<feature type="topological domain" description="Vacuolar" evidence="5">
    <location>
        <begin position="765"/>
        <end position="785"/>
    </location>
</feature>
<feature type="transmembrane region" description="Helical" evidence="5">
    <location>
        <begin position="786"/>
        <end position="824"/>
    </location>
</feature>
<feature type="topological domain" description="Cytoplasmic" evidence="5">
    <location>
        <begin position="825"/>
        <end position="856"/>
    </location>
</feature>
<feature type="modified residue" description="Phosphoserine" evidence="11 12">
    <location>
        <position position="695"/>
    </location>
</feature>
<feature type="modified residue" description="Phosphoserine" evidence="2">
    <location>
        <position position="700"/>
    </location>
</feature>
<feature type="glycosylation site" description="N-linked (GlcNAc...) asparagine" evidence="5">
    <location>
        <position position="484"/>
    </location>
</feature>
<feature type="glycosylation site" description="N-linked (GlcNAc...) asparagine" evidence="5">
    <location>
        <position position="505"/>
    </location>
</feature>
<feature type="sequence variant" id="VAR_042730" description="In dbSNP:rs7969410.">
    <original>R</original>
    <variation>Q</variation>
    <location>
        <position position="685"/>
    </location>
</feature>
<feature type="sequence variant" id="VAR_042731" description="In dbSNP:rs17883456.">
    <original>A</original>
    <variation>V</variation>
    <location>
        <position position="813"/>
    </location>
</feature>
<feature type="sequence conflict" description="In Ref. 1; AAD04632." evidence="10" ref="1">
    <original>L</original>
    <variation>W</variation>
    <location>
        <position position="428"/>
    </location>
</feature>
<feature type="sequence conflict" description="In Ref. 2; BAF82080." evidence="10" ref="2">
    <original>L</original>
    <variation>P</variation>
    <location>
        <position position="669"/>
    </location>
</feature>
<comment type="function">
    <text evidence="3 4 6 7 9">Subunit of the V0 complex of vacuolar(H+)-ATPase (V-ATPase), a multisubunit enzyme composed of a peripheral complex (V1) that hydrolyzes ATP and a membrane integral complex (V0) that translocates protons (By similarity). V-ATPase is responsible for acidifying and maintaining the pH of intracellular compartments and in some cell types, is targeted to the plasma membrane, where it is responsible for acidifying the extracellular environment (By similarity). Essential component of the endosomal pH-sensing machinery (PubMed:16415858). May play a role in maintaining the Golgi functions, such as glycosylation maturation, by controlling the Golgi pH (PubMed:18157129). In aerobic conditions, involved in intracellular iron homeostasis, thus triggering the activity of Fe(2+) prolyl hydroxylase (PHD) enzymes, and leading to HIF1A hydroxylation and subsequent proteasomal degradation (PubMed:28296633).</text>
</comment>
<comment type="subunit">
    <text evidence="4 6 8">V-ATPase is a heteromultimeric enzyme made up of two complexes: the ATP-hydrolytic V1 complex and the proton translocation V0 complex (By similarity). The V1 complex consists of three catalytic AB heterodimers that form a heterohexamer, three peripheral stalks each consisting of EG heterodimers, one central rotor including subunits D and F, and the regulatory subunits C and H (By similarity). The proton translocation complex V0 consists of the proton transport subunit a, a ring of proteolipid subunits c9c'', rotary subunit d, subunits e and f, and the accessory subunits ATP6AP1/Ac45 and ATP6AP2/PRR (By similarity). Directly interacts with PSCD2 through its N-terminal cytosolic tail in an intra-endosomal acidification-dependent manner (PubMed:16415858). Disruption of this interaction results in the inhibition of endocytosis (PubMed:16415858). Interacts with SPAAR (PubMed:28024296).</text>
</comment>
<comment type="interaction">
    <interactant intactId="EBI-988630">
        <id>Q9Y487</id>
    </interactant>
    <interactant intactId="EBI-448974">
        <id>Q99418</id>
        <label>CYTH2</label>
    </interactant>
    <organismsDiffer>false</organismsDiffer>
    <experiments>2</experiments>
</comment>
<comment type="subcellular location">
    <subcellularLocation>
        <location>Cell membrane</location>
        <topology>Multi-pass membrane protein</topology>
    </subcellularLocation>
    <subcellularLocation>
        <location>Endosome membrane</location>
    </subcellularLocation>
    <text evidence="1">In kidney proximal tubules, also detected in subapical vesicles.</text>
</comment>
<comment type="disease" evidence="7">
    <disease id="DI-01461">
        <name>Cutis laxa, autosomal recessive, 2A</name>
        <acronym>ARCL2A</acronym>
        <description>A disorder characterized by an excessive congenital skin wrinkling, a large fontanelle with delayed closure, a typical facial appearance with downslanting palpebral fissures, a general connective tissue weakness, and varying degrees of growth and developmental delay and neurological abnormalities. Some affected individuals develop seizures and mental deterioration later in life, whereas the skin phenotype tends to become milder with age. At the molecular level, an abnormal glycosylation of serum proteins is observed in many cases.</description>
        <dbReference type="MIM" id="219200"/>
    </disease>
    <text>The disease is caused by variants affecting the gene represented in this entry.</text>
</comment>
<comment type="disease" evidence="7">
    <disease id="DI-02425">
        <name>Wrinkly skin syndrome</name>
        <acronym>WSS</acronym>
        <description>A rare autosomal recessive disorder characterized by wrinkling of the skin of the dorsum of the hands and feet, an increased number of palmar and plantar creases, wrinkled abdominal skin, multiple musculoskeletal abnormalities, microcephaly, growth failure and developmental delay.</description>
        <dbReference type="MIM" id="278250"/>
    </disease>
    <text>The disease is caused by variants affecting the gene represented in this entry.</text>
</comment>
<comment type="similarity">
    <text evidence="10">Belongs to the V-ATPase 116 kDa subunit family.</text>
</comment>
<comment type="caution">
    <text evidence="10">The N-terminal peptide may increase IL1B secretion by peripheral blood monocytes; however as this region is probably in the cytosol, the in vivo relevance of this observation needs to be confirmed.</text>
</comment>
<sequence>MGSLFRSETMCLAQLFLQSGTAYECLSALGEKGLVQFRDLNQNVSSFQRKFVGEVKRCEELERILVYLVQEINRADIPLPEGEASPPAPPLKQVLEMQEQLQKLEVELREVTKNKEKLRKNLLELIEYTHMLRVTKTFVKRNVEFEPTYEEFPSLESDSLLDYSCMQRLGAKLGFVSGLINQGKVEAFEKMLWRVCKGYTIVSYAELDESLEDPETGEVIKWYVFLISFWGEQIGHKVKKICDCYHCHVYPYPNTAEERREIQEGLNTRIQDLYTVLHKTEDYLRQVLCKAAESVYSRVIQVKKMKAIYHMLNMCSFDVTNKCLIAEVWCPEADLQDLRRALEEGSRESGATIPSFMNIIPTKETPPTRIRTNKFTEGFQNIVDAYGVGSYREVNPALFTIITFPFLFAVMFGDFGHGFVMFLFALLLVLNENHPRLNQSQEIMRMFFNGRYILLLMGLFSVYTGLIYNDCFSKSVNLFGSGWNVSAMYSSSHPPAEHKKMVLWNDSVVRHNSILQLDPSIPGVFRGPYPLGIDPIWNLATNRLTFLNSFKMKMSVILGIIHMTFGVILGIFNHLHFRKKFNIYLVSIPELLFMLCIFGYLIFMIFYKWLVFSAETSRVAPSILIEFINMFLFPASKTSGLYTGQEYVQRVLLVVTALSVPVLFLGKPLFLLWLHNGRSCFGVNRSGYTLIRKDSEEEVSLLGSQDIEEGNHQVEDGCREMACEEFNFGEILMTQVIHSIEYCLGCISNTASYLRLWALSLAHAQLSDVLWAMLMRVGLRVDTTYGVLLLLPVIALFAVLTIFILLIMEGLSAFLHAIRLHWVEFQNKFYVGAGTKFVPFSFSLLSSKFNNDDSVA</sequence>
<keyword id="KW-1003">Cell membrane</keyword>
<keyword id="KW-0967">Endosome</keyword>
<keyword id="KW-0325">Glycoprotein</keyword>
<keyword id="KW-0375">Hydrogen ion transport</keyword>
<keyword id="KW-0406">Ion transport</keyword>
<keyword id="KW-0472">Membrane</keyword>
<keyword id="KW-0597">Phosphoprotein</keyword>
<keyword id="KW-1267">Proteomics identification</keyword>
<keyword id="KW-1185">Reference proteome</keyword>
<keyword id="KW-0812">Transmembrane</keyword>
<keyword id="KW-1133">Transmembrane helix</keyword>
<keyword id="KW-0813">Transport</keyword>
<gene>
    <name type="primary">ATP6V0A2</name>
</gene>
<name>VPP2_HUMAN</name>
<proteinExistence type="evidence at protein level"/>
<accession>Q9Y487</accession>
<accession>A8K026</accession>
<accession>Q6NUM0</accession>
<dbReference type="EMBL" id="AF112972">
    <property type="protein sequence ID" value="AAD04632.1"/>
    <property type="molecule type" value="mRNA"/>
</dbReference>
<dbReference type="EMBL" id="AK289391">
    <property type="protein sequence ID" value="BAF82080.1"/>
    <property type="molecule type" value="mRNA"/>
</dbReference>
<dbReference type="EMBL" id="CH471054">
    <property type="protein sequence ID" value="EAW98434.1"/>
    <property type="molecule type" value="Genomic_DNA"/>
</dbReference>
<dbReference type="EMBL" id="BC068531">
    <property type="protein sequence ID" value="AAH68531.1"/>
    <property type="molecule type" value="mRNA"/>
</dbReference>
<dbReference type="CCDS" id="CCDS9254.1"/>
<dbReference type="RefSeq" id="NP_036595.2">
    <property type="nucleotide sequence ID" value="NM_012463.3"/>
</dbReference>
<dbReference type="SMR" id="Q9Y487"/>
<dbReference type="BioGRID" id="117089">
    <property type="interactions" value="164"/>
</dbReference>
<dbReference type="ComplexPortal" id="CPX-6904">
    <property type="entry name" value="Vacuolar proton translocating ATPase complex, ATP6V0A2 variant"/>
</dbReference>
<dbReference type="FunCoup" id="Q9Y487">
    <property type="interactions" value="1545"/>
</dbReference>
<dbReference type="IntAct" id="Q9Y487">
    <property type="interactions" value="102"/>
</dbReference>
<dbReference type="MINT" id="Q9Y487"/>
<dbReference type="STRING" id="9606.ENSP00000332247"/>
<dbReference type="DrugBank" id="DB01133">
    <property type="generic name" value="Tiludronic acid"/>
</dbReference>
<dbReference type="GlyConnect" id="1898">
    <property type="glycosylation" value="2 N-Linked glycans (1 site)"/>
</dbReference>
<dbReference type="GlyCosmos" id="Q9Y487">
    <property type="glycosylation" value="2 sites, 2 glycans"/>
</dbReference>
<dbReference type="GlyGen" id="Q9Y487">
    <property type="glycosylation" value="5 sites, 6 N-linked glycans (3 sites), 1 O-linked glycan (1 site)"/>
</dbReference>
<dbReference type="iPTMnet" id="Q9Y487"/>
<dbReference type="PhosphoSitePlus" id="Q9Y487"/>
<dbReference type="SwissPalm" id="Q9Y487"/>
<dbReference type="BioMuta" id="ATP6V0A2"/>
<dbReference type="DMDM" id="172046607"/>
<dbReference type="jPOST" id="Q9Y487"/>
<dbReference type="MassIVE" id="Q9Y487"/>
<dbReference type="PaxDb" id="9606-ENSP00000332247"/>
<dbReference type="PeptideAtlas" id="Q9Y487"/>
<dbReference type="ProteomicsDB" id="86130"/>
<dbReference type="Pumba" id="Q9Y487"/>
<dbReference type="Antibodypedia" id="31833">
    <property type="antibodies" value="104 antibodies from 25 providers"/>
</dbReference>
<dbReference type="DNASU" id="23545"/>
<dbReference type="Ensembl" id="ENST00000330342.8">
    <property type="protein sequence ID" value="ENSP00000332247.2"/>
    <property type="gene ID" value="ENSG00000185344.15"/>
</dbReference>
<dbReference type="GeneID" id="23545"/>
<dbReference type="KEGG" id="hsa:23545"/>
<dbReference type="MANE-Select" id="ENST00000330342.8">
    <property type="protein sequence ID" value="ENSP00000332247.2"/>
    <property type="RefSeq nucleotide sequence ID" value="NM_012463.4"/>
    <property type="RefSeq protein sequence ID" value="NP_036595.2"/>
</dbReference>
<dbReference type="UCSC" id="uc001ufr.4">
    <property type="organism name" value="human"/>
</dbReference>
<dbReference type="AGR" id="HGNC:18481"/>
<dbReference type="CTD" id="23545"/>
<dbReference type="DisGeNET" id="23545"/>
<dbReference type="GeneCards" id="ATP6V0A2"/>
<dbReference type="GeneReviews" id="ATP6V0A2"/>
<dbReference type="HGNC" id="HGNC:18481">
    <property type="gene designation" value="ATP6V0A2"/>
</dbReference>
<dbReference type="HPA" id="ENSG00000185344">
    <property type="expression patterns" value="Low tissue specificity"/>
</dbReference>
<dbReference type="MalaCards" id="ATP6V0A2"/>
<dbReference type="MIM" id="219200">
    <property type="type" value="phenotype"/>
</dbReference>
<dbReference type="MIM" id="278250">
    <property type="type" value="phenotype"/>
</dbReference>
<dbReference type="MIM" id="611716">
    <property type="type" value="gene"/>
</dbReference>
<dbReference type="neXtProt" id="NX_Q9Y487"/>
<dbReference type="OpenTargets" id="ENSG00000185344"/>
<dbReference type="Orphanet" id="357074">
    <property type="disease" value="Autosomal recessive cutis laxa type 2, classic type"/>
</dbReference>
<dbReference type="Orphanet" id="2834">
    <property type="disease" value="Wrinkly skin syndrome"/>
</dbReference>
<dbReference type="PharmGKB" id="PA38549"/>
<dbReference type="VEuPathDB" id="HostDB:ENSG00000185344"/>
<dbReference type="eggNOG" id="KOG2189">
    <property type="taxonomic scope" value="Eukaryota"/>
</dbReference>
<dbReference type="GeneTree" id="ENSGT00950000182881"/>
<dbReference type="HOGENOM" id="CLU_005230_0_0_1"/>
<dbReference type="InParanoid" id="Q9Y487"/>
<dbReference type="OMA" id="TYVQLYI"/>
<dbReference type="OrthoDB" id="10264220at2759"/>
<dbReference type="PAN-GO" id="Q9Y487">
    <property type="GO annotations" value="4 GO annotations based on evolutionary models"/>
</dbReference>
<dbReference type="PhylomeDB" id="Q9Y487"/>
<dbReference type="TreeFam" id="TF300346"/>
<dbReference type="BioCyc" id="MetaCyc:G66-33375-MONOMER"/>
<dbReference type="BRENDA" id="7.1.2.1">
    <property type="organism ID" value="2681"/>
</dbReference>
<dbReference type="PathwayCommons" id="Q9Y487"/>
<dbReference type="Reactome" id="R-HSA-1222556">
    <property type="pathway name" value="ROS and RNS production in phagocytes"/>
</dbReference>
<dbReference type="Reactome" id="R-HSA-77387">
    <property type="pathway name" value="Insulin receptor recycling"/>
</dbReference>
<dbReference type="Reactome" id="R-HSA-917977">
    <property type="pathway name" value="Transferrin endocytosis and recycling"/>
</dbReference>
<dbReference type="Reactome" id="R-HSA-983712">
    <property type="pathway name" value="Ion channel transport"/>
</dbReference>
<dbReference type="SignaLink" id="Q9Y487"/>
<dbReference type="SIGNOR" id="Q9Y487"/>
<dbReference type="BioGRID-ORCS" id="23545">
    <property type="hits" value="34 hits in 1162 CRISPR screens"/>
</dbReference>
<dbReference type="ChiTaRS" id="ATP6V0A2">
    <property type="organism name" value="human"/>
</dbReference>
<dbReference type="GeneWiki" id="ATP6V0A2"/>
<dbReference type="GenomeRNAi" id="23545"/>
<dbReference type="Pharos" id="Q9Y487">
    <property type="development level" value="Tbio"/>
</dbReference>
<dbReference type="PRO" id="PR:Q9Y487"/>
<dbReference type="Proteomes" id="UP000005640">
    <property type="component" value="Chromosome 12"/>
</dbReference>
<dbReference type="RNAct" id="Q9Y487">
    <property type="molecule type" value="protein"/>
</dbReference>
<dbReference type="Bgee" id="ENSG00000185344">
    <property type="expression patterns" value="Expressed in skin of leg and 156 other cell types or tissues"/>
</dbReference>
<dbReference type="ExpressionAtlas" id="Q9Y487">
    <property type="expression patterns" value="baseline and differential"/>
</dbReference>
<dbReference type="GO" id="GO:0001669">
    <property type="term" value="C:acrosomal vesicle"/>
    <property type="evidence" value="ECO:0007669"/>
    <property type="project" value="Ensembl"/>
</dbReference>
<dbReference type="GO" id="GO:0010008">
    <property type="term" value="C:endosome membrane"/>
    <property type="evidence" value="ECO:0000304"/>
    <property type="project" value="Reactome"/>
</dbReference>
<dbReference type="GO" id="GO:0005925">
    <property type="term" value="C:focal adhesion"/>
    <property type="evidence" value="ECO:0000314"/>
    <property type="project" value="HPA"/>
</dbReference>
<dbReference type="GO" id="GO:0000139">
    <property type="term" value="C:Golgi membrane"/>
    <property type="evidence" value="ECO:0000303"/>
    <property type="project" value="ComplexPortal"/>
</dbReference>
<dbReference type="GO" id="GO:0043231">
    <property type="term" value="C:intracellular membrane-bounded organelle"/>
    <property type="evidence" value="ECO:0000314"/>
    <property type="project" value="HPA"/>
</dbReference>
<dbReference type="GO" id="GO:0005765">
    <property type="term" value="C:lysosomal membrane"/>
    <property type="evidence" value="ECO:0007005"/>
    <property type="project" value="UniProtKB"/>
</dbReference>
<dbReference type="GO" id="GO:0048471">
    <property type="term" value="C:perinuclear region of cytoplasm"/>
    <property type="evidence" value="ECO:0007669"/>
    <property type="project" value="Ensembl"/>
</dbReference>
<dbReference type="GO" id="GO:0030670">
    <property type="term" value="C:phagocytic vesicle membrane"/>
    <property type="evidence" value="ECO:0000304"/>
    <property type="project" value="Reactome"/>
</dbReference>
<dbReference type="GO" id="GO:0005886">
    <property type="term" value="C:plasma membrane"/>
    <property type="evidence" value="ECO:0000314"/>
    <property type="project" value="HPA"/>
</dbReference>
<dbReference type="GO" id="GO:0033176">
    <property type="term" value="C:proton-transporting V-type ATPase complex"/>
    <property type="evidence" value="ECO:0000303"/>
    <property type="project" value="ComplexPortal"/>
</dbReference>
<dbReference type="GO" id="GO:0016471">
    <property type="term" value="C:vacuolar proton-transporting V-type ATPase complex"/>
    <property type="evidence" value="ECO:0000318"/>
    <property type="project" value="GO_Central"/>
</dbReference>
<dbReference type="GO" id="GO:0000220">
    <property type="term" value="C:vacuolar proton-transporting V-type ATPase, V0 domain"/>
    <property type="evidence" value="ECO:0007669"/>
    <property type="project" value="InterPro"/>
</dbReference>
<dbReference type="GO" id="GO:0051117">
    <property type="term" value="F:ATPase binding"/>
    <property type="evidence" value="ECO:0000318"/>
    <property type="project" value="GO_Central"/>
</dbReference>
<dbReference type="GO" id="GO:0046961">
    <property type="term" value="F:proton-transporting ATPase activity, rotational mechanism"/>
    <property type="evidence" value="ECO:0007669"/>
    <property type="project" value="InterPro"/>
</dbReference>
<dbReference type="GO" id="GO:0036295">
    <property type="term" value="P:cellular response to increased oxygen levels"/>
    <property type="evidence" value="ECO:0000315"/>
    <property type="project" value="UniProtKB"/>
</dbReference>
<dbReference type="GO" id="GO:0061795">
    <property type="term" value="P:Golgi lumen acidification"/>
    <property type="evidence" value="ECO:0000303"/>
    <property type="project" value="ComplexPortal"/>
</dbReference>
<dbReference type="GO" id="GO:0006955">
    <property type="term" value="P:immune response"/>
    <property type="evidence" value="ECO:0000304"/>
    <property type="project" value="ProtInc"/>
</dbReference>
<dbReference type="GO" id="GO:0006879">
    <property type="term" value="P:intracellular iron ion homeostasis"/>
    <property type="evidence" value="ECO:0000315"/>
    <property type="project" value="UniProtKB"/>
</dbReference>
<dbReference type="GO" id="GO:1902600">
    <property type="term" value="P:proton transmembrane transport"/>
    <property type="evidence" value="ECO:0000303"/>
    <property type="project" value="ComplexPortal"/>
</dbReference>
<dbReference type="GO" id="GO:0016241">
    <property type="term" value="P:regulation of macroautophagy"/>
    <property type="evidence" value="ECO:0000303"/>
    <property type="project" value="ParkinsonsUK-UCL"/>
</dbReference>
<dbReference type="GO" id="GO:0007035">
    <property type="term" value="P:vacuolar acidification"/>
    <property type="evidence" value="ECO:0000318"/>
    <property type="project" value="GO_Central"/>
</dbReference>
<dbReference type="InterPro" id="IPR002490">
    <property type="entry name" value="V-ATPase_116kDa_su"/>
</dbReference>
<dbReference type="InterPro" id="IPR026028">
    <property type="entry name" value="V-type_ATPase_116kDa_su_euka"/>
</dbReference>
<dbReference type="PANTHER" id="PTHR11629:SF22">
    <property type="entry name" value="V-TYPE PROTON ATPASE 116 KDA SUBUNIT A 2"/>
    <property type="match status" value="1"/>
</dbReference>
<dbReference type="PANTHER" id="PTHR11629">
    <property type="entry name" value="VACUOLAR PROTON ATPASES"/>
    <property type="match status" value="1"/>
</dbReference>
<dbReference type="Pfam" id="PF01496">
    <property type="entry name" value="V_ATPase_I"/>
    <property type="match status" value="1"/>
</dbReference>
<dbReference type="PIRSF" id="PIRSF001293">
    <property type="entry name" value="ATP6V0A1"/>
    <property type="match status" value="1"/>
</dbReference>
<reference key="1">
    <citation type="submission" date="1998-12" db="EMBL/GenBank/DDBJ databases">
        <title>Characterization of human TJ6 homolog.</title>
        <authorList>
            <person name="Babichev Y."/>
            <person name="Isakov N."/>
        </authorList>
    </citation>
    <scope>NUCLEOTIDE SEQUENCE [MRNA]</scope>
</reference>
<reference key="2">
    <citation type="journal article" date="2004" name="Nat. Genet.">
        <title>Complete sequencing and characterization of 21,243 full-length human cDNAs.</title>
        <authorList>
            <person name="Ota T."/>
            <person name="Suzuki Y."/>
            <person name="Nishikawa T."/>
            <person name="Otsuki T."/>
            <person name="Sugiyama T."/>
            <person name="Irie R."/>
            <person name="Wakamatsu A."/>
            <person name="Hayashi K."/>
            <person name="Sato H."/>
            <person name="Nagai K."/>
            <person name="Kimura K."/>
            <person name="Makita H."/>
            <person name="Sekine M."/>
            <person name="Obayashi M."/>
            <person name="Nishi T."/>
            <person name="Shibahara T."/>
            <person name="Tanaka T."/>
            <person name="Ishii S."/>
            <person name="Yamamoto J."/>
            <person name="Saito K."/>
            <person name="Kawai Y."/>
            <person name="Isono Y."/>
            <person name="Nakamura Y."/>
            <person name="Nagahari K."/>
            <person name="Murakami K."/>
            <person name="Yasuda T."/>
            <person name="Iwayanagi T."/>
            <person name="Wagatsuma M."/>
            <person name="Shiratori A."/>
            <person name="Sudo H."/>
            <person name="Hosoiri T."/>
            <person name="Kaku Y."/>
            <person name="Kodaira H."/>
            <person name="Kondo H."/>
            <person name="Sugawara M."/>
            <person name="Takahashi M."/>
            <person name="Kanda K."/>
            <person name="Yokoi T."/>
            <person name="Furuya T."/>
            <person name="Kikkawa E."/>
            <person name="Omura Y."/>
            <person name="Abe K."/>
            <person name="Kamihara K."/>
            <person name="Katsuta N."/>
            <person name="Sato K."/>
            <person name="Tanikawa M."/>
            <person name="Yamazaki M."/>
            <person name="Ninomiya K."/>
            <person name="Ishibashi T."/>
            <person name="Yamashita H."/>
            <person name="Murakawa K."/>
            <person name="Fujimori K."/>
            <person name="Tanai H."/>
            <person name="Kimata M."/>
            <person name="Watanabe M."/>
            <person name="Hiraoka S."/>
            <person name="Chiba Y."/>
            <person name="Ishida S."/>
            <person name="Ono Y."/>
            <person name="Takiguchi S."/>
            <person name="Watanabe S."/>
            <person name="Yosida M."/>
            <person name="Hotuta T."/>
            <person name="Kusano J."/>
            <person name="Kanehori K."/>
            <person name="Takahashi-Fujii A."/>
            <person name="Hara H."/>
            <person name="Tanase T.-O."/>
            <person name="Nomura Y."/>
            <person name="Togiya S."/>
            <person name="Komai F."/>
            <person name="Hara R."/>
            <person name="Takeuchi K."/>
            <person name="Arita M."/>
            <person name="Imose N."/>
            <person name="Musashino K."/>
            <person name="Yuuki H."/>
            <person name="Oshima A."/>
            <person name="Sasaki N."/>
            <person name="Aotsuka S."/>
            <person name="Yoshikawa Y."/>
            <person name="Matsunawa H."/>
            <person name="Ichihara T."/>
            <person name="Shiohata N."/>
            <person name="Sano S."/>
            <person name="Moriya S."/>
            <person name="Momiyama H."/>
            <person name="Satoh N."/>
            <person name="Takami S."/>
            <person name="Terashima Y."/>
            <person name="Suzuki O."/>
            <person name="Nakagawa S."/>
            <person name="Senoh A."/>
            <person name="Mizoguchi H."/>
            <person name="Goto Y."/>
            <person name="Shimizu F."/>
            <person name="Wakebe H."/>
            <person name="Hishigaki H."/>
            <person name="Watanabe T."/>
            <person name="Sugiyama A."/>
            <person name="Takemoto M."/>
            <person name="Kawakami B."/>
            <person name="Yamazaki M."/>
            <person name="Watanabe K."/>
            <person name="Kumagai A."/>
            <person name="Itakura S."/>
            <person name="Fukuzumi Y."/>
            <person name="Fujimori Y."/>
            <person name="Komiyama M."/>
            <person name="Tashiro H."/>
            <person name="Tanigami A."/>
            <person name="Fujiwara T."/>
            <person name="Ono T."/>
            <person name="Yamada K."/>
            <person name="Fujii Y."/>
            <person name="Ozaki K."/>
            <person name="Hirao M."/>
            <person name="Ohmori Y."/>
            <person name="Kawabata A."/>
            <person name="Hikiji T."/>
            <person name="Kobatake N."/>
            <person name="Inagaki H."/>
            <person name="Ikema Y."/>
            <person name="Okamoto S."/>
            <person name="Okitani R."/>
            <person name="Kawakami T."/>
            <person name="Noguchi S."/>
            <person name="Itoh T."/>
            <person name="Shigeta K."/>
            <person name="Senba T."/>
            <person name="Matsumura K."/>
            <person name="Nakajima Y."/>
            <person name="Mizuno T."/>
            <person name="Morinaga M."/>
            <person name="Sasaki M."/>
            <person name="Togashi T."/>
            <person name="Oyama M."/>
            <person name="Hata H."/>
            <person name="Watanabe M."/>
            <person name="Komatsu T."/>
            <person name="Mizushima-Sugano J."/>
            <person name="Satoh T."/>
            <person name="Shirai Y."/>
            <person name="Takahashi Y."/>
            <person name="Nakagawa K."/>
            <person name="Okumura K."/>
            <person name="Nagase T."/>
            <person name="Nomura N."/>
            <person name="Kikuchi H."/>
            <person name="Masuho Y."/>
            <person name="Yamashita R."/>
            <person name="Nakai K."/>
            <person name="Yada T."/>
            <person name="Nakamura Y."/>
            <person name="Ohara O."/>
            <person name="Isogai T."/>
            <person name="Sugano S."/>
        </authorList>
    </citation>
    <scope>NUCLEOTIDE SEQUENCE [LARGE SCALE MRNA]</scope>
    <source>
        <tissue>Astrocyte</tissue>
    </source>
</reference>
<reference key="3">
    <citation type="submission" date="2005-07" db="EMBL/GenBank/DDBJ databases">
        <authorList>
            <person name="Mural R.J."/>
            <person name="Istrail S."/>
            <person name="Sutton G.G."/>
            <person name="Florea L."/>
            <person name="Halpern A.L."/>
            <person name="Mobarry C.M."/>
            <person name="Lippert R."/>
            <person name="Walenz B."/>
            <person name="Shatkay H."/>
            <person name="Dew I."/>
            <person name="Miller J.R."/>
            <person name="Flanigan M.J."/>
            <person name="Edwards N.J."/>
            <person name="Bolanos R."/>
            <person name="Fasulo D."/>
            <person name="Halldorsson B.V."/>
            <person name="Hannenhalli S."/>
            <person name="Turner R."/>
            <person name="Yooseph S."/>
            <person name="Lu F."/>
            <person name="Nusskern D.R."/>
            <person name="Shue B.C."/>
            <person name="Zheng X.H."/>
            <person name="Zhong F."/>
            <person name="Delcher A.L."/>
            <person name="Huson D.H."/>
            <person name="Kravitz S.A."/>
            <person name="Mouchard L."/>
            <person name="Reinert K."/>
            <person name="Remington K.A."/>
            <person name="Clark A.G."/>
            <person name="Waterman M.S."/>
            <person name="Eichler E.E."/>
            <person name="Adams M.D."/>
            <person name="Hunkapiller M.W."/>
            <person name="Myers E.W."/>
            <person name="Venter J.C."/>
        </authorList>
    </citation>
    <scope>NUCLEOTIDE SEQUENCE [LARGE SCALE GENOMIC DNA]</scope>
</reference>
<reference key="4">
    <citation type="journal article" date="2004" name="Genome Res.">
        <title>The status, quality, and expansion of the NIH full-length cDNA project: the Mammalian Gene Collection (MGC).</title>
        <authorList>
            <consortium name="The MGC Project Team"/>
        </authorList>
    </citation>
    <scope>NUCLEOTIDE SEQUENCE [LARGE SCALE MRNA]</scope>
    <source>
        <tissue>Placenta</tissue>
    </source>
</reference>
<reference key="5">
    <citation type="journal article" date="2006" name="Nat. Cell Biol.">
        <title>V-ATPase interacts with ARNO and Arf6 in early endosomes and regulates the protein degradative pathway.</title>
        <authorList>
            <person name="Hurtado-Lorenzo A."/>
            <person name="Skinner M."/>
            <person name="El Annan J."/>
            <person name="Futai M."/>
            <person name="Sun-Wada G.-H."/>
            <person name="Bourgoin S."/>
            <person name="Casanova J."/>
            <person name="Wildeman A."/>
            <person name="Bechoua S."/>
            <person name="Ausiello D.A."/>
            <person name="Brown D."/>
            <person name="Marshansky V."/>
        </authorList>
    </citation>
    <scope>FUNCTION</scope>
    <scope>SUBCELLULAR LOCATION</scope>
    <scope>INTERACTION WITH PSCD2</scope>
</reference>
<reference key="6">
    <citation type="journal article" date="2007" name="Am. J. Reprod. Immunol.">
        <title>The N-terminal domain of the a2 isoform of vacuolar ATPase can regulate interleukin-1beta production from mononuclear cells in co-culture with JEG-3 choriocarcinoma cells.</title>
        <authorList>
            <person name="Ntrivalas E."/>
            <person name="Gilman-Sachs A."/>
            <person name="Kwak-Kim J."/>
            <person name="Beaman K."/>
        </authorList>
    </citation>
    <scope>SUBCELLULAR LOCATION</scope>
</reference>
<reference key="7">
    <citation type="journal article" date="2007" name="Science">
        <title>ATM and ATR substrate analysis reveals extensive protein networks responsive to DNA damage.</title>
        <authorList>
            <person name="Matsuoka S."/>
            <person name="Ballif B.A."/>
            <person name="Smogorzewska A."/>
            <person name="McDonald E.R. III"/>
            <person name="Hurov K.E."/>
            <person name="Luo J."/>
            <person name="Bakalarski C.E."/>
            <person name="Zhao Z."/>
            <person name="Solimini N."/>
            <person name="Lerenthal Y."/>
            <person name="Shiloh Y."/>
            <person name="Gygi S.P."/>
            <person name="Elledge S.J."/>
        </authorList>
    </citation>
    <scope>PHOSPHORYLATION [LARGE SCALE ANALYSIS] AT SER-695</scope>
    <scope>IDENTIFICATION BY MASS SPECTROMETRY [LARGE SCALE ANALYSIS]</scope>
    <source>
        <tissue>Embryonic kidney</tissue>
    </source>
</reference>
<reference key="8">
    <citation type="journal article" date="2008" name="Nat. Genet.">
        <title>Impaired glycosylation and cutis laxa caused by mutations in the vesicular H+-ATPase subunit ATP6V0A2.</title>
        <authorList>
            <person name="Kornak U."/>
            <person name="Reynders E."/>
            <person name="Dimopoulou A."/>
            <person name="van Reeuwijk J."/>
            <person name="Fischer B."/>
            <person name="Rajab A."/>
            <person name="Budde B."/>
            <person name="Nuernberg P."/>
            <person name="Foulquier F."/>
            <person name="Dobyns W.B."/>
            <person name="Quelhas D."/>
            <person name="Vilarinho L."/>
            <person name="Leao-Teles E."/>
            <person name="Greally M."/>
            <person name="Seemanova E."/>
            <person name="Simandlova M."/>
            <person name="Salih M."/>
            <person name="Nanda A."/>
            <person name="Basel-Vanagaite L."/>
            <person name="Kayserili H."/>
            <person name="Yuksel-Apak M."/>
            <person name="Larregue M."/>
            <person name="Vigneron J."/>
            <person name="Giurgea S."/>
            <person name="Lefeber D."/>
            <person name="Urban Z."/>
            <person name="Gruenewald S."/>
            <person name="Annaert W."/>
            <person name="Brunner H.G."/>
            <person name="van Bokhoven H."/>
            <person name="Wevers R."/>
            <person name="Morava E."/>
            <person name="Matthijs G."/>
            <person name="Van Maldergem L."/>
            <person name="Mundlos S."/>
        </authorList>
    </citation>
    <scope>INVOLVEMENT IN ARCL2A</scope>
    <scope>INVOLVEMENT IN WSS</scope>
    <scope>FUNCTION</scope>
    <scope>SUBCELLULAR LOCATION</scope>
</reference>
<reference key="9">
    <citation type="journal article" date="2008" name="Proc. Natl. Acad. Sci. U.S.A.">
        <title>A quantitative atlas of mitotic phosphorylation.</title>
        <authorList>
            <person name="Dephoure N."/>
            <person name="Zhou C."/>
            <person name="Villen J."/>
            <person name="Beausoleil S.A."/>
            <person name="Bakalarski C.E."/>
            <person name="Elledge S.J."/>
            <person name="Gygi S.P."/>
        </authorList>
    </citation>
    <scope>IDENTIFICATION BY MASS SPECTROMETRY [LARGE SCALE ANALYSIS]</scope>
    <source>
        <tissue>Cervix carcinoma</tissue>
    </source>
</reference>
<reference key="10">
    <citation type="journal article" date="2011" name="BMC Syst. Biol.">
        <title>Initial characterization of the human central proteome.</title>
        <authorList>
            <person name="Burkard T.R."/>
            <person name="Planyavsky M."/>
            <person name="Kaupe I."/>
            <person name="Breitwieser F.P."/>
            <person name="Buerckstuemmer T."/>
            <person name="Bennett K.L."/>
            <person name="Superti-Furga G."/>
            <person name="Colinge J."/>
        </authorList>
    </citation>
    <scope>IDENTIFICATION BY MASS SPECTROMETRY [LARGE SCALE ANALYSIS]</scope>
</reference>
<reference key="11">
    <citation type="journal article" date="2013" name="J. Proteome Res.">
        <title>Toward a comprehensive characterization of a human cancer cell phosphoproteome.</title>
        <authorList>
            <person name="Zhou H."/>
            <person name="Di Palma S."/>
            <person name="Preisinger C."/>
            <person name="Peng M."/>
            <person name="Polat A.N."/>
            <person name="Heck A.J."/>
            <person name="Mohammed S."/>
        </authorList>
    </citation>
    <scope>PHOSPHORYLATION [LARGE SCALE ANALYSIS] AT SER-695</scope>
    <scope>IDENTIFICATION BY MASS SPECTROMETRY [LARGE SCALE ANALYSIS]</scope>
    <source>
        <tissue>Erythroleukemia</tissue>
    </source>
</reference>
<reference key="12">
    <citation type="journal article" date="2017" name="Elife">
        <title>The vacuolar-ATPase complex and assembly factors, TMEM199 and CCDC115, control HIF1alpha prolyl hydroxylation by regulating cellular iron levels.</title>
        <authorList>
            <person name="Miles A.L."/>
            <person name="Burr S.P."/>
            <person name="Grice G.L."/>
            <person name="Nathan J.A."/>
        </authorList>
    </citation>
    <scope>FUNCTION</scope>
</reference>
<reference key="13">
    <citation type="journal article" date="2017" name="Nature">
        <title>mTORC1 and muscle regeneration are regulated by the LINC00961-encoded SPAR polypeptide.</title>
        <authorList>
            <person name="Matsumoto A."/>
            <person name="Pasut A."/>
            <person name="Matsumoto M."/>
            <person name="Yamashita R."/>
            <person name="Fung J."/>
            <person name="Monteleone E."/>
            <person name="Saghatelian A."/>
            <person name="Nakayama K.I."/>
            <person name="Clohessy J.G."/>
            <person name="Pandolfi P.P."/>
        </authorList>
    </citation>
    <scope>INTERACTION WITH SPAAR</scope>
</reference>
<protein>
    <recommendedName>
        <fullName>V-type proton ATPase 116 kDa subunit a 2</fullName>
        <shortName>V-ATPase 116 kDa subunit a 2</shortName>
    </recommendedName>
    <alternativeName>
        <fullName>Lysosomal H(+)-transporting ATPase V0 subunit a 2</fullName>
    </alternativeName>
    <alternativeName>
        <fullName>TJ6</fullName>
    </alternativeName>
    <alternativeName>
        <fullName>Vacuolar proton translocating ATPase 116 kDa subunit a isoform 2</fullName>
    </alternativeName>
</protein>
<evidence type="ECO:0000250" key="1"/>
<evidence type="ECO:0000250" key="2">
    <source>
        <dbReference type="UniProtKB" id="P15920"/>
    </source>
</evidence>
<evidence type="ECO:0000250" key="3">
    <source>
        <dbReference type="UniProtKB" id="Q29466"/>
    </source>
</evidence>
<evidence type="ECO:0000250" key="4">
    <source>
        <dbReference type="UniProtKB" id="Q93050"/>
    </source>
</evidence>
<evidence type="ECO:0000255" key="5"/>
<evidence type="ECO:0000269" key="6">
    <source>
    </source>
</evidence>
<evidence type="ECO:0000269" key="7">
    <source>
    </source>
</evidence>
<evidence type="ECO:0000269" key="8">
    <source>
    </source>
</evidence>
<evidence type="ECO:0000269" key="9">
    <source>
    </source>
</evidence>
<evidence type="ECO:0000305" key="10"/>
<evidence type="ECO:0007744" key="11">
    <source>
    </source>
</evidence>
<evidence type="ECO:0007744" key="12">
    <source>
    </source>
</evidence>